<proteinExistence type="inferred from homology"/>
<comment type="function">
    <text evidence="1">Vacuolar carboxypeptidase involved in degradation of small peptides. Digests preferentially peptides containing an aliphatic or hydrophobic residue in P1' position, as well as methionine, leucine or phenylalanine in P1 position of ester substrate (By similarity).</text>
</comment>
<comment type="catalytic activity">
    <reaction evidence="3">
        <text>Release of a C-terminal amino acid with broad specificity.</text>
        <dbReference type="EC" id="3.4.16.5"/>
    </reaction>
</comment>
<comment type="subcellular location">
    <subcellularLocation>
        <location evidence="1">Vacuole</location>
    </subcellularLocation>
</comment>
<comment type="similarity">
    <text evidence="4">Belongs to the peptidase S10 family.</text>
</comment>
<evidence type="ECO:0000250" key="1"/>
<evidence type="ECO:0000255" key="2"/>
<evidence type="ECO:0000255" key="3">
    <source>
        <dbReference type="PROSITE-ProRule" id="PRU10074"/>
    </source>
</evidence>
<evidence type="ECO:0000305" key="4"/>
<protein>
    <recommendedName>
        <fullName>Carboxypeptidase Y homolog A</fullName>
        <ecNumber>3.4.16.5</ecNumber>
    </recommendedName>
</protein>
<feature type="signal peptide" evidence="2">
    <location>
        <begin position="1"/>
        <end position="17"/>
    </location>
</feature>
<feature type="propeptide" id="PRO_0000407470" evidence="1">
    <location>
        <begin position="18"/>
        <end position="128"/>
    </location>
</feature>
<feature type="chain" id="PRO_0000407471" description="Carboxypeptidase Y homolog A">
    <location>
        <begin position="129"/>
        <end position="543"/>
    </location>
</feature>
<feature type="active site" evidence="3">
    <location>
        <position position="269"/>
    </location>
</feature>
<feature type="active site" evidence="3">
    <location>
        <position position="460"/>
    </location>
</feature>
<feature type="active site" evidence="3">
    <location>
        <position position="519"/>
    </location>
</feature>
<feature type="glycosylation site" description="N-linked (GlcNAc...) asparagine" evidence="2">
    <location>
        <position position="213"/>
    </location>
</feature>
<feature type="glycosylation site" description="N-linked (GlcNAc...) asparagine" evidence="2">
    <location>
        <position position="508"/>
    </location>
</feature>
<feature type="disulfide bond" evidence="1">
    <location>
        <begin position="182"/>
        <end position="421"/>
    </location>
</feature>
<feature type="disulfide bond" evidence="1">
    <location>
        <begin position="316"/>
        <end position="330"/>
    </location>
</feature>
<feature type="disulfide bond" evidence="1">
    <location>
        <begin position="340"/>
        <end position="363"/>
    </location>
</feature>
<feature type="disulfide bond" evidence="1">
    <location>
        <begin position="347"/>
        <end position="356"/>
    </location>
</feature>
<feature type="disulfide bond" evidence="1">
    <location>
        <begin position="385"/>
        <end position="391"/>
    </location>
</feature>
<gene>
    <name type="primary">CPYA</name>
    <name type="ORF">SNOG_02053</name>
</gene>
<name>CBPYA_PHANO</name>
<organism>
    <name type="scientific">Phaeosphaeria nodorum (strain SN15 / ATCC MYA-4574 / FGSC 10173)</name>
    <name type="common">Glume blotch fungus</name>
    <name type="synonym">Parastagonospora nodorum</name>
    <dbReference type="NCBI Taxonomy" id="321614"/>
    <lineage>
        <taxon>Eukaryota</taxon>
        <taxon>Fungi</taxon>
        <taxon>Dikarya</taxon>
        <taxon>Ascomycota</taxon>
        <taxon>Pezizomycotina</taxon>
        <taxon>Dothideomycetes</taxon>
        <taxon>Pleosporomycetidae</taxon>
        <taxon>Pleosporales</taxon>
        <taxon>Pleosporineae</taxon>
        <taxon>Phaeosphaeriaceae</taxon>
        <taxon>Parastagonospora</taxon>
    </lineage>
</organism>
<sequence length="543" mass="61071">MRVAASALLAGAASAAVAPQQQILKFPSSFSELKEDLWSKPLHNLEESLKSLTGEAKATWDEVATMYPESFDKAAFFSTPKPHTRKHDSEWDHIVKGADVQSVWVENAQGEKEREIDGKLEQFDLRVKKVDPSVLGVDKVKQYSGYLDDNEEDKHLFYWFFESRNDPKNDPVVLWLNGGPGCSSLMGLFMELGPASVMKDGKLKHNDYSWNANASVIFLDQPVNVGYSYSSGSVSNTVAAGKDIYALLTLFFKQFPEYSKQPFHISGESYAGHYIPVFASEILSHKKRNINLQSVLIGNGLTDGLTQYEYYRPMACGEGGWPAVLDESSCQAMDNAYPRCASLIENCYKSESVWSCVPASIYCNNAMIGPYQRTGQNVYDVRRPCGDNQLCYDEIDYISAFLNKKEVMKAVGAEVSSYDSCNFDINRNFLLQGDWMKPYHRVVPGLLEEIPVLVYAGDADYICNWLGNKAWTEALEWKGHEEYKKAEMKDFKIDGDGKKVGEVKSSGNFTFMKIHAGGHMVPFDQPEASLEMVNRWLSGEFWE</sequence>
<keyword id="KW-0121">Carboxypeptidase</keyword>
<keyword id="KW-1015">Disulfide bond</keyword>
<keyword id="KW-0325">Glycoprotein</keyword>
<keyword id="KW-0378">Hydrolase</keyword>
<keyword id="KW-0645">Protease</keyword>
<keyword id="KW-0732">Signal</keyword>
<keyword id="KW-0926">Vacuole</keyword>
<keyword id="KW-0865">Zymogen</keyword>
<dbReference type="EC" id="3.4.16.5"/>
<dbReference type="EMBL" id="CH445327">
    <property type="protein sequence ID" value="EAT90265.1"/>
    <property type="molecule type" value="Genomic_DNA"/>
</dbReference>
<dbReference type="RefSeq" id="XP_001792672.1">
    <property type="nucleotide sequence ID" value="XM_001792620.1"/>
</dbReference>
<dbReference type="SMR" id="Q0V1R1"/>
<dbReference type="FunCoup" id="Q0V1R1">
    <property type="interactions" value="800"/>
</dbReference>
<dbReference type="ESTHER" id="phano-cbpya">
    <property type="family name" value="Carboxypeptidase_S10"/>
</dbReference>
<dbReference type="MEROPS" id="S10.001"/>
<dbReference type="GlyCosmos" id="Q0V1R1">
    <property type="glycosylation" value="2 sites, No reported glycans"/>
</dbReference>
<dbReference type="EnsemblFungi" id="SNOT_02053">
    <property type="protein sequence ID" value="SNOT_02053"/>
    <property type="gene ID" value="SNOG_02053"/>
</dbReference>
<dbReference type="GeneID" id="5969522"/>
<dbReference type="KEGG" id="pno:SNOG_02053"/>
<dbReference type="VEuPathDB" id="FungiDB:JI435_020530"/>
<dbReference type="eggNOG" id="KOG1282">
    <property type="taxonomic scope" value="Eukaryota"/>
</dbReference>
<dbReference type="HOGENOM" id="CLU_008523_10_4_1"/>
<dbReference type="InParanoid" id="Q0V1R1"/>
<dbReference type="OMA" id="GDWMKPF"/>
<dbReference type="OrthoDB" id="443318at2759"/>
<dbReference type="Proteomes" id="UP000001055">
    <property type="component" value="Unassembled WGS sequence"/>
</dbReference>
<dbReference type="GO" id="GO:0000324">
    <property type="term" value="C:fungal-type vacuole"/>
    <property type="evidence" value="ECO:0000318"/>
    <property type="project" value="GO_Central"/>
</dbReference>
<dbReference type="GO" id="GO:0004185">
    <property type="term" value="F:serine-type carboxypeptidase activity"/>
    <property type="evidence" value="ECO:0000318"/>
    <property type="project" value="GO_Central"/>
</dbReference>
<dbReference type="GO" id="GO:0006508">
    <property type="term" value="P:proteolysis"/>
    <property type="evidence" value="ECO:0007669"/>
    <property type="project" value="UniProtKB-KW"/>
</dbReference>
<dbReference type="FunFam" id="1.10.287.410:FF:000001">
    <property type="entry name" value="Carboxypeptidase Y"/>
    <property type="match status" value="1"/>
</dbReference>
<dbReference type="Gene3D" id="1.10.287.410">
    <property type="match status" value="1"/>
</dbReference>
<dbReference type="Gene3D" id="3.40.50.1820">
    <property type="entry name" value="alpha/beta hydrolase"/>
    <property type="match status" value="1"/>
</dbReference>
<dbReference type="InterPro" id="IPR029058">
    <property type="entry name" value="AB_hydrolase_fold"/>
</dbReference>
<dbReference type="InterPro" id="IPR001563">
    <property type="entry name" value="Peptidase_S10"/>
</dbReference>
<dbReference type="InterPro" id="IPR008442">
    <property type="entry name" value="Propeptide_carboxypepY"/>
</dbReference>
<dbReference type="InterPro" id="IPR018202">
    <property type="entry name" value="Ser_caboxypep_ser_AS"/>
</dbReference>
<dbReference type="PANTHER" id="PTHR11802:SF113">
    <property type="entry name" value="SERINE CARBOXYPEPTIDASE CTSA-4.1"/>
    <property type="match status" value="1"/>
</dbReference>
<dbReference type="PANTHER" id="PTHR11802">
    <property type="entry name" value="SERINE PROTEASE FAMILY S10 SERINE CARBOXYPEPTIDASE"/>
    <property type="match status" value="1"/>
</dbReference>
<dbReference type="Pfam" id="PF05388">
    <property type="entry name" value="Carbpep_Y_N"/>
    <property type="match status" value="1"/>
</dbReference>
<dbReference type="Pfam" id="PF00450">
    <property type="entry name" value="Peptidase_S10"/>
    <property type="match status" value="1"/>
</dbReference>
<dbReference type="PRINTS" id="PR00724">
    <property type="entry name" value="CRBOXYPTASEC"/>
</dbReference>
<dbReference type="SUPFAM" id="SSF53474">
    <property type="entry name" value="alpha/beta-Hydrolases"/>
    <property type="match status" value="1"/>
</dbReference>
<dbReference type="PROSITE" id="PS00131">
    <property type="entry name" value="CARBOXYPEPT_SER_SER"/>
    <property type="match status" value="1"/>
</dbReference>
<reference key="1">
    <citation type="journal article" date="2007" name="Plant Cell">
        <title>Dothideomycete-plant interactions illuminated by genome sequencing and EST analysis of the wheat pathogen Stagonospora nodorum.</title>
        <authorList>
            <person name="Hane J.K."/>
            <person name="Lowe R.G.T."/>
            <person name="Solomon P.S."/>
            <person name="Tan K.-C."/>
            <person name="Schoch C.L."/>
            <person name="Spatafora J.W."/>
            <person name="Crous P.W."/>
            <person name="Kodira C.D."/>
            <person name="Birren B.W."/>
            <person name="Galagan J.E."/>
            <person name="Torriani S.F.F."/>
            <person name="McDonald B.A."/>
            <person name="Oliver R.P."/>
        </authorList>
    </citation>
    <scope>NUCLEOTIDE SEQUENCE [LARGE SCALE GENOMIC DNA]</scope>
    <source>
        <strain>SN15 / ATCC MYA-4574 / FGSC 10173</strain>
    </source>
</reference>
<accession>Q0V1R1</accession>